<reference key="1">
    <citation type="journal article" date="2006" name="Mol. Microbiol.">
        <title>Role of pathogenicity island-associated integrases in the genome plasticity of uropathogenic Escherichia coli strain 536.</title>
        <authorList>
            <person name="Hochhut B."/>
            <person name="Wilde C."/>
            <person name="Balling G."/>
            <person name="Middendorf B."/>
            <person name="Dobrindt U."/>
            <person name="Brzuszkiewicz E."/>
            <person name="Gottschalk G."/>
            <person name="Carniel E."/>
            <person name="Hacker J."/>
        </authorList>
    </citation>
    <scope>NUCLEOTIDE SEQUENCE [LARGE SCALE GENOMIC DNA]</scope>
    <source>
        <strain>536 / UPEC</strain>
    </source>
</reference>
<comment type="function">
    <text evidence="1">Condensation of UDP-2,3-diacylglucosamine and 2,3-diacylglucosamine-1-phosphate to form lipid A disaccharide, a precursor of lipid A, a phosphorylated glycolipid that anchors the lipopolysaccharide to the outer membrane of the cell.</text>
</comment>
<comment type="catalytic activity">
    <reaction evidence="1">
        <text>2-N,3-O-bis[(3R)-3-hydroxytetradecanoyl]-alpha-D-glucosaminyl 1-phosphate + UDP-2-N,3-O-bis[(3R)-3-hydroxytetradecanoyl]-alpha-D-glucosamine = lipid A disaccharide (E. coli) + UDP + H(+)</text>
        <dbReference type="Rhea" id="RHEA:22668"/>
        <dbReference type="ChEBI" id="CHEBI:15378"/>
        <dbReference type="ChEBI" id="CHEBI:57957"/>
        <dbReference type="ChEBI" id="CHEBI:58223"/>
        <dbReference type="ChEBI" id="CHEBI:58466"/>
        <dbReference type="ChEBI" id="CHEBI:78847"/>
    </reaction>
</comment>
<comment type="catalytic activity">
    <reaction evidence="1">
        <text>a lipid X + a UDP-2-N,3-O-bis[(3R)-3-hydroxyacyl]-alpha-D-glucosamine = a lipid A disaccharide + UDP + H(+)</text>
        <dbReference type="Rhea" id="RHEA:67828"/>
        <dbReference type="ChEBI" id="CHEBI:15378"/>
        <dbReference type="ChEBI" id="CHEBI:58223"/>
        <dbReference type="ChEBI" id="CHEBI:137748"/>
        <dbReference type="ChEBI" id="CHEBI:176338"/>
        <dbReference type="ChEBI" id="CHEBI:176343"/>
        <dbReference type="EC" id="2.4.1.182"/>
    </reaction>
</comment>
<comment type="pathway">
    <text evidence="1">Glycolipid biosynthesis; lipid IV(A) biosynthesis; lipid IV(A) from (3R)-3-hydroxytetradecanoyl-[acyl-carrier-protein] and UDP-N-acetyl-alpha-D-glucosamine: step 5/6.</text>
</comment>
<comment type="similarity">
    <text evidence="1">Belongs to the LpxB family.</text>
</comment>
<protein>
    <recommendedName>
        <fullName evidence="1">Lipid-A-disaccharide synthase</fullName>
        <ecNumber evidence="1">2.4.1.182</ecNumber>
    </recommendedName>
</protein>
<evidence type="ECO:0000255" key="1">
    <source>
        <dbReference type="HAMAP-Rule" id="MF_00392"/>
    </source>
</evidence>
<feature type="chain" id="PRO_0000255180" description="Lipid-A-disaccharide synthase">
    <location>
        <begin position="1"/>
        <end position="382"/>
    </location>
</feature>
<organism>
    <name type="scientific">Escherichia coli O6:K15:H31 (strain 536 / UPEC)</name>
    <dbReference type="NCBI Taxonomy" id="362663"/>
    <lineage>
        <taxon>Bacteria</taxon>
        <taxon>Pseudomonadati</taxon>
        <taxon>Pseudomonadota</taxon>
        <taxon>Gammaproteobacteria</taxon>
        <taxon>Enterobacterales</taxon>
        <taxon>Enterobacteriaceae</taxon>
        <taxon>Escherichia</taxon>
    </lineage>
</organism>
<proteinExistence type="inferred from homology"/>
<gene>
    <name evidence="1" type="primary">lpxB</name>
    <name type="ordered locus">ECP_0190</name>
</gene>
<keyword id="KW-0328">Glycosyltransferase</keyword>
<keyword id="KW-0441">Lipid A biosynthesis</keyword>
<keyword id="KW-0444">Lipid biosynthesis</keyword>
<keyword id="KW-0443">Lipid metabolism</keyword>
<keyword id="KW-0808">Transferase</keyword>
<dbReference type="EC" id="2.4.1.182" evidence="1"/>
<dbReference type="EMBL" id="CP000247">
    <property type="protein sequence ID" value="ABG68230.1"/>
    <property type="molecule type" value="Genomic_DNA"/>
</dbReference>
<dbReference type="RefSeq" id="WP_000139678.1">
    <property type="nucleotide sequence ID" value="NC_008253.1"/>
</dbReference>
<dbReference type="SMR" id="Q0TLF1"/>
<dbReference type="CAZy" id="GT19">
    <property type="family name" value="Glycosyltransferase Family 19"/>
</dbReference>
<dbReference type="KEGG" id="ecp:ECP_0190"/>
<dbReference type="HOGENOM" id="CLU_036577_3_0_6"/>
<dbReference type="UniPathway" id="UPA00359">
    <property type="reaction ID" value="UER00481"/>
</dbReference>
<dbReference type="Proteomes" id="UP000009182">
    <property type="component" value="Chromosome"/>
</dbReference>
<dbReference type="GO" id="GO:0016020">
    <property type="term" value="C:membrane"/>
    <property type="evidence" value="ECO:0007669"/>
    <property type="project" value="GOC"/>
</dbReference>
<dbReference type="GO" id="GO:0008915">
    <property type="term" value="F:lipid-A-disaccharide synthase activity"/>
    <property type="evidence" value="ECO:0007669"/>
    <property type="project" value="UniProtKB-UniRule"/>
</dbReference>
<dbReference type="GO" id="GO:0005543">
    <property type="term" value="F:phospholipid binding"/>
    <property type="evidence" value="ECO:0007669"/>
    <property type="project" value="TreeGrafter"/>
</dbReference>
<dbReference type="GO" id="GO:0009245">
    <property type="term" value="P:lipid A biosynthetic process"/>
    <property type="evidence" value="ECO:0007669"/>
    <property type="project" value="UniProtKB-UniRule"/>
</dbReference>
<dbReference type="CDD" id="cd01635">
    <property type="entry name" value="Glycosyltransferase_GTB-type"/>
    <property type="match status" value="1"/>
</dbReference>
<dbReference type="HAMAP" id="MF_00392">
    <property type="entry name" value="LpxB"/>
    <property type="match status" value="1"/>
</dbReference>
<dbReference type="InterPro" id="IPR003835">
    <property type="entry name" value="Glyco_trans_19"/>
</dbReference>
<dbReference type="NCBIfam" id="TIGR00215">
    <property type="entry name" value="lpxB"/>
    <property type="match status" value="1"/>
</dbReference>
<dbReference type="PANTHER" id="PTHR30372">
    <property type="entry name" value="LIPID-A-DISACCHARIDE SYNTHASE"/>
    <property type="match status" value="1"/>
</dbReference>
<dbReference type="PANTHER" id="PTHR30372:SF4">
    <property type="entry name" value="LIPID-A-DISACCHARIDE SYNTHASE, MITOCHONDRIAL-RELATED"/>
    <property type="match status" value="1"/>
</dbReference>
<dbReference type="Pfam" id="PF02684">
    <property type="entry name" value="LpxB"/>
    <property type="match status" value="1"/>
</dbReference>
<dbReference type="SUPFAM" id="SSF53756">
    <property type="entry name" value="UDP-Glycosyltransferase/glycogen phosphorylase"/>
    <property type="match status" value="1"/>
</dbReference>
<accession>Q0TLF1</accession>
<name>LPXB_ECOL5</name>
<sequence length="382" mass="42355">MTEQRPLTIALVAGETSGDILGAGLIRALKERVPNARFVGVAGPRMQAEGCEAWYEMEELAVMGIVEVLGRLRRLLHIRADLTKRFGELKPDVFVGIDAPDFNITLEGNLKKQGIKTIHYVSPSVWAWRQKRVFKIGRATDLVLAFLPFEKAFYDKYNVPCRFIGHTMADAMPLDPDKNGARDVLGIPYDAHCLALLPGSRGAEVEMLSADFLKTAQLLRQTYPDLEIVVPLVNAKRREQFERIKAAVAPDLSVHLLDGMGREAMVASDAALLASGTAALECMLAKCPMVVGYRMKPFTFWLAKRLVKTDYVSLPNLLAGRELVKELLQEECEPQKLAAALLPLLANGKTSHAMHDTFRELHQQIRCNADEQAAQAVLELAQ</sequence>